<keyword id="KW-0227">DNA damage</keyword>
<keyword id="KW-0234">DNA repair</keyword>
<keyword id="KW-0255">Endonuclease</keyword>
<keyword id="KW-0378">Hydrolase</keyword>
<keyword id="KW-0479">Metal-binding</keyword>
<keyword id="KW-0540">Nuclease</keyword>
<keyword id="KW-0862">Zinc</keyword>
<evidence type="ECO:0000255" key="1">
    <source>
        <dbReference type="HAMAP-Rule" id="MF_00152"/>
    </source>
</evidence>
<name>END4_PHOV8</name>
<gene>
    <name evidence="1" type="primary">nfo</name>
    <name type="ordered locus">BVU_2436</name>
</gene>
<feature type="chain" id="PRO_1000011293" description="Probable endonuclease 4">
    <location>
        <begin position="1"/>
        <end position="278"/>
    </location>
</feature>
<feature type="binding site" evidence="1">
    <location>
        <position position="69"/>
    </location>
    <ligand>
        <name>Zn(2+)</name>
        <dbReference type="ChEBI" id="CHEBI:29105"/>
        <label>1</label>
    </ligand>
</feature>
<feature type="binding site" evidence="1">
    <location>
        <position position="109"/>
    </location>
    <ligand>
        <name>Zn(2+)</name>
        <dbReference type="ChEBI" id="CHEBI:29105"/>
        <label>1</label>
    </ligand>
</feature>
<feature type="binding site" evidence="1">
    <location>
        <position position="145"/>
    </location>
    <ligand>
        <name>Zn(2+)</name>
        <dbReference type="ChEBI" id="CHEBI:29105"/>
        <label>1</label>
    </ligand>
</feature>
<feature type="binding site" evidence="1">
    <location>
        <position position="145"/>
    </location>
    <ligand>
        <name>Zn(2+)</name>
        <dbReference type="ChEBI" id="CHEBI:29105"/>
        <label>2</label>
    </ligand>
</feature>
<feature type="binding site" evidence="1">
    <location>
        <position position="179"/>
    </location>
    <ligand>
        <name>Zn(2+)</name>
        <dbReference type="ChEBI" id="CHEBI:29105"/>
        <label>2</label>
    </ligand>
</feature>
<feature type="binding site" evidence="1">
    <location>
        <position position="182"/>
    </location>
    <ligand>
        <name>Zn(2+)</name>
        <dbReference type="ChEBI" id="CHEBI:29105"/>
        <label>3</label>
    </ligand>
</feature>
<feature type="binding site" evidence="1">
    <location>
        <position position="214"/>
    </location>
    <ligand>
        <name>Zn(2+)</name>
        <dbReference type="ChEBI" id="CHEBI:29105"/>
        <label>2</label>
    </ligand>
</feature>
<feature type="binding site" evidence="1">
    <location>
        <position position="227"/>
    </location>
    <ligand>
        <name>Zn(2+)</name>
        <dbReference type="ChEBI" id="CHEBI:29105"/>
        <label>3</label>
    </ligand>
</feature>
<feature type="binding site" evidence="1">
    <location>
        <position position="229"/>
    </location>
    <ligand>
        <name>Zn(2+)</name>
        <dbReference type="ChEBI" id="CHEBI:29105"/>
        <label>3</label>
    </ligand>
</feature>
<feature type="binding site" evidence="1">
    <location>
        <position position="259"/>
    </location>
    <ligand>
        <name>Zn(2+)</name>
        <dbReference type="ChEBI" id="CHEBI:29105"/>
        <label>2</label>
    </ligand>
</feature>
<organism>
    <name type="scientific">Phocaeicola vulgatus (strain ATCC 8482 / DSM 1447 / JCM 5826 / CCUG 4940 / NBRC 14291 / NCTC 11154)</name>
    <name type="common">Bacteroides vulgatus</name>
    <dbReference type="NCBI Taxonomy" id="435590"/>
    <lineage>
        <taxon>Bacteria</taxon>
        <taxon>Pseudomonadati</taxon>
        <taxon>Bacteroidota</taxon>
        <taxon>Bacteroidia</taxon>
        <taxon>Bacteroidales</taxon>
        <taxon>Bacteroidaceae</taxon>
        <taxon>Phocaeicola</taxon>
    </lineage>
</organism>
<proteinExistence type="inferred from homology"/>
<protein>
    <recommendedName>
        <fullName evidence="1">Probable endonuclease 4</fullName>
        <ecNumber evidence="1">3.1.21.2</ecNumber>
    </recommendedName>
    <alternativeName>
        <fullName evidence="1">Endodeoxyribonuclease IV</fullName>
    </alternativeName>
    <alternativeName>
        <fullName evidence="1">Endonuclease IV</fullName>
    </alternativeName>
</protein>
<sequence length="278" mass="31400">MKKIGAHVSVSGGVEMAPVNALGIGADAFALFTKNQRQWVAKPLSVESVTLFKENCEKEGFDARYVLPHDSYLINLGHPDEEGLEKSRAAFLDEMQRCELLGLKMLNFHPGSHLNKISIEKCLDRIAESVNMTLDKTTGVTAVIENTAGQGSNVGNEFWHLRYIIDKVEDKSRVGVCLDTCHTYTAGYDIVNEYDRVFTEFDEVVGRNYLCAIHLNDSKKPLGSRVDRHDSIGKGLIGIDFFRRFMQDSRFDDMPVILETPDDTIWRDEIKMLRSFES</sequence>
<reference key="1">
    <citation type="journal article" date="2007" name="PLoS Biol.">
        <title>Evolution of symbiotic bacteria in the distal human intestine.</title>
        <authorList>
            <person name="Xu J."/>
            <person name="Mahowald M.A."/>
            <person name="Ley R.E."/>
            <person name="Lozupone C.A."/>
            <person name="Hamady M."/>
            <person name="Martens E.C."/>
            <person name="Henrissat B."/>
            <person name="Coutinho P.M."/>
            <person name="Minx P."/>
            <person name="Latreille P."/>
            <person name="Cordum H."/>
            <person name="Van Brunt A."/>
            <person name="Kim K."/>
            <person name="Fulton R.S."/>
            <person name="Fulton L.A."/>
            <person name="Clifton S.W."/>
            <person name="Wilson R.K."/>
            <person name="Knight R.D."/>
            <person name="Gordon J.I."/>
        </authorList>
    </citation>
    <scope>NUCLEOTIDE SEQUENCE [LARGE SCALE GENOMIC DNA]</scope>
    <source>
        <strain>ATCC 8482 / DSM 1447 / JCM 5826 / CCUG 4940 / NBRC 14291 / NCTC 11154</strain>
    </source>
</reference>
<comment type="function">
    <text evidence="1">Endonuclease IV plays a role in DNA repair. It cleaves phosphodiester bonds at apurinic or apyrimidinic (AP) sites, generating a 3'-hydroxyl group and a 5'-terminal sugar phosphate.</text>
</comment>
<comment type="catalytic activity">
    <reaction evidence="1">
        <text>Endonucleolytic cleavage to 5'-phosphooligonucleotide end-products.</text>
        <dbReference type="EC" id="3.1.21.2"/>
    </reaction>
</comment>
<comment type="cofactor">
    <cofactor evidence="1">
        <name>Zn(2+)</name>
        <dbReference type="ChEBI" id="CHEBI:29105"/>
    </cofactor>
    <text evidence="1">Binds 3 Zn(2+) ions.</text>
</comment>
<comment type="similarity">
    <text evidence="1">Belongs to the AP endonuclease 2 family.</text>
</comment>
<accession>A6L330</accession>
<dbReference type="EC" id="3.1.21.2" evidence="1"/>
<dbReference type="EMBL" id="CP000139">
    <property type="protein sequence ID" value="ABR40094.1"/>
    <property type="molecule type" value="Genomic_DNA"/>
</dbReference>
<dbReference type="RefSeq" id="WP_005841766.1">
    <property type="nucleotide sequence ID" value="NZ_JANSWM010000041.1"/>
</dbReference>
<dbReference type="SMR" id="A6L330"/>
<dbReference type="STRING" id="435590.BVU_2436"/>
<dbReference type="PaxDb" id="435590-BVU_2436"/>
<dbReference type="GeneID" id="5303400"/>
<dbReference type="KEGG" id="bvu:BVU_2436"/>
<dbReference type="eggNOG" id="COG0648">
    <property type="taxonomic scope" value="Bacteria"/>
</dbReference>
<dbReference type="HOGENOM" id="CLU_025885_0_4_10"/>
<dbReference type="BioCyc" id="BVUL435590:G1G59-2535-MONOMER"/>
<dbReference type="Proteomes" id="UP000002861">
    <property type="component" value="Chromosome"/>
</dbReference>
<dbReference type="GO" id="GO:0008833">
    <property type="term" value="F:deoxyribonuclease IV (phage-T4-induced) activity"/>
    <property type="evidence" value="ECO:0007669"/>
    <property type="project" value="UniProtKB-UniRule"/>
</dbReference>
<dbReference type="GO" id="GO:0003677">
    <property type="term" value="F:DNA binding"/>
    <property type="evidence" value="ECO:0007669"/>
    <property type="project" value="InterPro"/>
</dbReference>
<dbReference type="GO" id="GO:0003906">
    <property type="term" value="F:DNA-(apurinic or apyrimidinic site) endonuclease activity"/>
    <property type="evidence" value="ECO:0007669"/>
    <property type="project" value="TreeGrafter"/>
</dbReference>
<dbReference type="GO" id="GO:0008081">
    <property type="term" value="F:phosphoric diester hydrolase activity"/>
    <property type="evidence" value="ECO:0007669"/>
    <property type="project" value="TreeGrafter"/>
</dbReference>
<dbReference type="GO" id="GO:0008270">
    <property type="term" value="F:zinc ion binding"/>
    <property type="evidence" value="ECO:0007669"/>
    <property type="project" value="UniProtKB-UniRule"/>
</dbReference>
<dbReference type="GO" id="GO:0006284">
    <property type="term" value="P:base-excision repair"/>
    <property type="evidence" value="ECO:0007669"/>
    <property type="project" value="TreeGrafter"/>
</dbReference>
<dbReference type="CDD" id="cd00019">
    <property type="entry name" value="AP2Ec"/>
    <property type="match status" value="1"/>
</dbReference>
<dbReference type="FunFam" id="3.20.20.150:FF:000001">
    <property type="entry name" value="Probable endonuclease 4"/>
    <property type="match status" value="1"/>
</dbReference>
<dbReference type="Gene3D" id="3.20.20.150">
    <property type="entry name" value="Divalent-metal-dependent TIM barrel enzymes"/>
    <property type="match status" value="1"/>
</dbReference>
<dbReference type="HAMAP" id="MF_00152">
    <property type="entry name" value="Nfo"/>
    <property type="match status" value="1"/>
</dbReference>
<dbReference type="InterPro" id="IPR001719">
    <property type="entry name" value="AP_endonuc_2"/>
</dbReference>
<dbReference type="InterPro" id="IPR018246">
    <property type="entry name" value="AP_endonuc_F2_Zn_BS"/>
</dbReference>
<dbReference type="InterPro" id="IPR036237">
    <property type="entry name" value="Xyl_isomerase-like_sf"/>
</dbReference>
<dbReference type="InterPro" id="IPR013022">
    <property type="entry name" value="Xyl_isomerase-like_TIM-brl"/>
</dbReference>
<dbReference type="NCBIfam" id="TIGR00587">
    <property type="entry name" value="nfo"/>
    <property type="match status" value="1"/>
</dbReference>
<dbReference type="NCBIfam" id="NF002199">
    <property type="entry name" value="PRK01060.1-4"/>
    <property type="match status" value="1"/>
</dbReference>
<dbReference type="PANTHER" id="PTHR21445:SF0">
    <property type="entry name" value="APURINIC-APYRIMIDINIC ENDONUCLEASE"/>
    <property type="match status" value="1"/>
</dbReference>
<dbReference type="PANTHER" id="PTHR21445">
    <property type="entry name" value="ENDONUCLEASE IV ENDODEOXYRIBONUCLEASE IV"/>
    <property type="match status" value="1"/>
</dbReference>
<dbReference type="Pfam" id="PF01261">
    <property type="entry name" value="AP_endonuc_2"/>
    <property type="match status" value="1"/>
</dbReference>
<dbReference type="SMART" id="SM00518">
    <property type="entry name" value="AP2Ec"/>
    <property type="match status" value="1"/>
</dbReference>
<dbReference type="SUPFAM" id="SSF51658">
    <property type="entry name" value="Xylose isomerase-like"/>
    <property type="match status" value="1"/>
</dbReference>
<dbReference type="PROSITE" id="PS00729">
    <property type="entry name" value="AP_NUCLEASE_F2_1"/>
    <property type="match status" value="1"/>
</dbReference>
<dbReference type="PROSITE" id="PS00730">
    <property type="entry name" value="AP_NUCLEASE_F2_2"/>
    <property type="match status" value="1"/>
</dbReference>
<dbReference type="PROSITE" id="PS00731">
    <property type="entry name" value="AP_NUCLEASE_F2_3"/>
    <property type="match status" value="1"/>
</dbReference>
<dbReference type="PROSITE" id="PS51432">
    <property type="entry name" value="AP_NUCLEASE_F2_4"/>
    <property type="match status" value="1"/>
</dbReference>